<dbReference type="EC" id="5.4.99.12" evidence="1"/>
<dbReference type="EMBL" id="AP006627">
    <property type="protein sequence ID" value="BAD62725.1"/>
    <property type="molecule type" value="Genomic_DNA"/>
</dbReference>
<dbReference type="RefSeq" id="WP_011245045.1">
    <property type="nucleotide sequence ID" value="NC_006582.1"/>
</dbReference>
<dbReference type="SMR" id="Q5WLN0"/>
<dbReference type="STRING" id="66692.ABC0182"/>
<dbReference type="KEGG" id="bcl:ABC0182"/>
<dbReference type="eggNOG" id="COG0101">
    <property type="taxonomic scope" value="Bacteria"/>
</dbReference>
<dbReference type="HOGENOM" id="CLU_014673_0_1_9"/>
<dbReference type="OrthoDB" id="9811823at2"/>
<dbReference type="Proteomes" id="UP000001168">
    <property type="component" value="Chromosome"/>
</dbReference>
<dbReference type="GO" id="GO:0003723">
    <property type="term" value="F:RNA binding"/>
    <property type="evidence" value="ECO:0007669"/>
    <property type="project" value="InterPro"/>
</dbReference>
<dbReference type="GO" id="GO:0160147">
    <property type="term" value="F:tRNA pseudouridine(38-40) synthase activity"/>
    <property type="evidence" value="ECO:0007669"/>
    <property type="project" value="UniProtKB-EC"/>
</dbReference>
<dbReference type="GO" id="GO:0031119">
    <property type="term" value="P:tRNA pseudouridine synthesis"/>
    <property type="evidence" value="ECO:0007669"/>
    <property type="project" value="UniProtKB-UniRule"/>
</dbReference>
<dbReference type="CDD" id="cd02570">
    <property type="entry name" value="PseudoU_synth_EcTruA"/>
    <property type="match status" value="1"/>
</dbReference>
<dbReference type="FunFam" id="3.30.70.580:FF:000001">
    <property type="entry name" value="tRNA pseudouridine synthase A"/>
    <property type="match status" value="1"/>
</dbReference>
<dbReference type="Gene3D" id="3.30.70.660">
    <property type="entry name" value="Pseudouridine synthase I, catalytic domain, C-terminal subdomain"/>
    <property type="match status" value="1"/>
</dbReference>
<dbReference type="Gene3D" id="3.30.70.580">
    <property type="entry name" value="Pseudouridine synthase I, catalytic domain, N-terminal subdomain"/>
    <property type="match status" value="1"/>
</dbReference>
<dbReference type="HAMAP" id="MF_00171">
    <property type="entry name" value="TruA"/>
    <property type="match status" value="1"/>
</dbReference>
<dbReference type="InterPro" id="IPR020103">
    <property type="entry name" value="PsdUridine_synth_cat_dom_sf"/>
</dbReference>
<dbReference type="InterPro" id="IPR001406">
    <property type="entry name" value="PsdUridine_synth_TruA"/>
</dbReference>
<dbReference type="InterPro" id="IPR020097">
    <property type="entry name" value="PsdUridine_synth_TruA_a/b_dom"/>
</dbReference>
<dbReference type="InterPro" id="IPR020095">
    <property type="entry name" value="PsdUridine_synth_TruA_C"/>
</dbReference>
<dbReference type="InterPro" id="IPR020094">
    <property type="entry name" value="TruA/RsuA/RluB/E/F_N"/>
</dbReference>
<dbReference type="NCBIfam" id="TIGR00071">
    <property type="entry name" value="hisT_truA"/>
    <property type="match status" value="1"/>
</dbReference>
<dbReference type="PANTHER" id="PTHR11142">
    <property type="entry name" value="PSEUDOURIDYLATE SYNTHASE"/>
    <property type="match status" value="1"/>
</dbReference>
<dbReference type="PANTHER" id="PTHR11142:SF0">
    <property type="entry name" value="TRNA PSEUDOURIDINE SYNTHASE-LIKE 1"/>
    <property type="match status" value="1"/>
</dbReference>
<dbReference type="Pfam" id="PF01416">
    <property type="entry name" value="PseudoU_synth_1"/>
    <property type="match status" value="2"/>
</dbReference>
<dbReference type="PIRSF" id="PIRSF001430">
    <property type="entry name" value="tRNA_psdUrid_synth"/>
    <property type="match status" value="1"/>
</dbReference>
<dbReference type="SUPFAM" id="SSF55120">
    <property type="entry name" value="Pseudouridine synthase"/>
    <property type="match status" value="1"/>
</dbReference>
<reference key="1">
    <citation type="submission" date="2003-10" db="EMBL/GenBank/DDBJ databases">
        <title>The complete genome sequence of the alkaliphilic Bacillus clausii KSM-K16.</title>
        <authorList>
            <person name="Takaki Y."/>
            <person name="Kageyama Y."/>
            <person name="Shimamura S."/>
            <person name="Suzuki H."/>
            <person name="Nishi S."/>
            <person name="Hatada Y."/>
            <person name="Kawai S."/>
            <person name="Ito S."/>
            <person name="Horikoshi K."/>
        </authorList>
    </citation>
    <scope>NUCLEOTIDE SEQUENCE [LARGE SCALE GENOMIC DNA]</scope>
    <source>
        <strain>KSM-K16</strain>
    </source>
</reference>
<organism>
    <name type="scientific">Shouchella clausii (strain KSM-K16)</name>
    <name type="common">Alkalihalobacillus clausii</name>
    <dbReference type="NCBI Taxonomy" id="66692"/>
    <lineage>
        <taxon>Bacteria</taxon>
        <taxon>Bacillati</taxon>
        <taxon>Bacillota</taxon>
        <taxon>Bacilli</taxon>
        <taxon>Bacillales</taxon>
        <taxon>Bacillaceae</taxon>
        <taxon>Shouchella</taxon>
    </lineage>
</organism>
<evidence type="ECO:0000255" key="1">
    <source>
        <dbReference type="HAMAP-Rule" id="MF_00171"/>
    </source>
</evidence>
<name>TRUA_SHOC1</name>
<feature type="chain" id="PRO_0000057332" description="tRNA pseudouridine synthase A">
    <location>
        <begin position="1"/>
        <end position="261"/>
    </location>
</feature>
<feature type="active site" description="Nucleophile" evidence="1">
    <location>
        <position position="53"/>
    </location>
</feature>
<feature type="binding site" evidence="1">
    <location>
        <position position="111"/>
    </location>
    <ligand>
        <name>substrate</name>
    </ligand>
</feature>
<comment type="function">
    <text evidence="1">Formation of pseudouridine at positions 38, 39 and 40 in the anticodon stem and loop of transfer RNAs.</text>
</comment>
<comment type="catalytic activity">
    <reaction evidence="1">
        <text>uridine(38/39/40) in tRNA = pseudouridine(38/39/40) in tRNA</text>
        <dbReference type="Rhea" id="RHEA:22376"/>
        <dbReference type="Rhea" id="RHEA-COMP:10085"/>
        <dbReference type="Rhea" id="RHEA-COMP:10087"/>
        <dbReference type="ChEBI" id="CHEBI:65314"/>
        <dbReference type="ChEBI" id="CHEBI:65315"/>
        <dbReference type="EC" id="5.4.99.12"/>
    </reaction>
</comment>
<comment type="subunit">
    <text evidence="1">Homodimer.</text>
</comment>
<comment type="similarity">
    <text evidence="1">Belongs to the tRNA pseudouridine synthase TruA family.</text>
</comment>
<accession>Q5WLN0</accession>
<protein>
    <recommendedName>
        <fullName evidence="1">tRNA pseudouridine synthase A</fullName>
        <ecNumber evidence="1">5.4.99.12</ecNumber>
    </recommendedName>
    <alternativeName>
        <fullName evidence="1">tRNA pseudouridine(38-40) synthase</fullName>
    </alternativeName>
    <alternativeName>
        <fullName evidence="1">tRNA pseudouridylate synthase I</fullName>
    </alternativeName>
    <alternativeName>
        <fullName evidence="1">tRNA-uridine isomerase I</fullName>
    </alternativeName>
</protein>
<sequence length="261" mass="28541">MSRMACKLSYDGTAFAGYQVQPGKRTVQSEVERALQEIHKGARVPVVASGRTDAGVHACGQVLHFDTELTIAPERWVSALNTHLPDDIVVTNAAMVEPDFHARYGAQAKEYRYYIQCGPFENVFRRHFAVHIKQALDVPAMQTAAKHLLGTHDFSAFCAANTTVTDKVRTITHVAVQPSEEGLLISIRGTGFLYNMVRIIVGTLLEIGTGKRVASEMKVILAGKSRNLAGKTAPAHGLCLYEVDYGQPLFVNETPGQVSMN</sequence>
<gene>
    <name evidence="1" type="primary">truA</name>
    <name type="ordered locus">ABC0182</name>
</gene>
<keyword id="KW-0413">Isomerase</keyword>
<keyword id="KW-1185">Reference proteome</keyword>
<keyword id="KW-0819">tRNA processing</keyword>
<proteinExistence type="inferred from homology"/>